<protein>
    <recommendedName>
        <fullName>Histone deacetylase 2</fullName>
        <shortName>HD2</shortName>
        <ecNumber evidence="4">3.5.1.98</ecNumber>
    </recommendedName>
    <alternativeName>
        <fullName evidence="6">Protein deacylase HDAC2</fullName>
        <ecNumber evidence="4">3.5.1.-</ecNumber>
    </alternativeName>
</protein>
<dbReference type="EC" id="3.5.1.98" evidence="4"/>
<dbReference type="EC" id="3.5.1.-" evidence="4"/>
<dbReference type="EMBL" id="AF039752">
    <property type="protein sequence ID" value="AAB96924.1"/>
    <property type="molecule type" value="mRNA"/>
</dbReference>
<dbReference type="SMR" id="P56519"/>
<dbReference type="BioGRID" id="675914">
    <property type="interactions" value="3"/>
</dbReference>
<dbReference type="FunCoup" id="P56519">
    <property type="interactions" value="2852"/>
</dbReference>
<dbReference type="IntAct" id="P56519">
    <property type="interactions" value="1"/>
</dbReference>
<dbReference type="STRING" id="9031.ENSGALP00000057637"/>
<dbReference type="iPTMnet" id="P56519"/>
<dbReference type="PaxDb" id="9031-ENSGALP00000024133"/>
<dbReference type="VEuPathDB" id="HostDB:geneid_395635"/>
<dbReference type="eggNOG" id="KOG1342">
    <property type="taxonomic scope" value="Eukaryota"/>
</dbReference>
<dbReference type="InParanoid" id="P56519"/>
<dbReference type="OrthoDB" id="1918432at2759"/>
<dbReference type="PhylomeDB" id="P56519"/>
<dbReference type="Proteomes" id="UP000000539">
    <property type="component" value="Unassembled WGS sequence"/>
</dbReference>
<dbReference type="GO" id="GO:0005737">
    <property type="term" value="C:cytoplasm"/>
    <property type="evidence" value="ECO:0000304"/>
    <property type="project" value="UniProtKB"/>
</dbReference>
<dbReference type="GO" id="GO:0035098">
    <property type="term" value="C:ESC/E(Z) complex"/>
    <property type="evidence" value="ECO:0000250"/>
    <property type="project" value="UniProtKB"/>
</dbReference>
<dbReference type="GO" id="GO:0000118">
    <property type="term" value="C:histone deacetylase complex"/>
    <property type="evidence" value="ECO:0000304"/>
    <property type="project" value="UniProtKB"/>
</dbReference>
<dbReference type="GO" id="GO:0005634">
    <property type="term" value="C:nucleus"/>
    <property type="evidence" value="ECO:0000250"/>
    <property type="project" value="UniProtKB"/>
</dbReference>
<dbReference type="GO" id="GO:0016581">
    <property type="term" value="C:NuRD complex"/>
    <property type="evidence" value="ECO:0000250"/>
    <property type="project" value="UniProtKB"/>
</dbReference>
<dbReference type="GO" id="GO:0140297">
    <property type="term" value="F:DNA-binding transcription factor binding"/>
    <property type="evidence" value="ECO:0000304"/>
    <property type="project" value="UniProtKB"/>
</dbReference>
<dbReference type="GO" id="GO:0004407">
    <property type="term" value="F:histone deacetylase activity"/>
    <property type="evidence" value="ECO:0000250"/>
    <property type="project" value="UniProtKB"/>
</dbReference>
<dbReference type="GO" id="GO:0141221">
    <property type="term" value="F:histone deacetylase activity, hydrolytic mechanism"/>
    <property type="evidence" value="ECO:0007669"/>
    <property type="project" value="UniProtKB-EC"/>
</dbReference>
<dbReference type="GO" id="GO:0160009">
    <property type="term" value="F:histone decrotonylase activity"/>
    <property type="evidence" value="ECO:0000250"/>
    <property type="project" value="UniProtKB"/>
</dbReference>
<dbReference type="GO" id="GO:0046872">
    <property type="term" value="F:metal ion binding"/>
    <property type="evidence" value="ECO:0007669"/>
    <property type="project" value="UniProtKB-KW"/>
</dbReference>
<dbReference type="GO" id="GO:0160010">
    <property type="term" value="F:protein de-2-hydroxyisobutyrylase activity"/>
    <property type="evidence" value="ECO:0000250"/>
    <property type="project" value="UniProtKB"/>
</dbReference>
<dbReference type="GO" id="GO:0160216">
    <property type="term" value="F:protein lysine delactylase activity"/>
    <property type="evidence" value="ECO:0000250"/>
    <property type="project" value="UniProtKB"/>
</dbReference>
<dbReference type="GO" id="GO:0006325">
    <property type="term" value="P:chromatin organization"/>
    <property type="evidence" value="ECO:0000304"/>
    <property type="project" value="UniProtKB"/>
</dbReference>
<dbReference type="GO" id="GO:0031507">
    <property type="term" value="P:heterochromatin formation"/>
    <property type="evidence" value="ECO:0000318"/>
    <property type="project" value="GO_Central"/>
</dbReference>
<dbReference type="CDD" id="cd10011">
    <property type="entry name" value="HDAC2"/>
    <property type="match status" value="1"/>
</dbReference>
<dbReference type="FunFam" id="3.40.800.20:FF:000003">
    <property type="entry name" value="Histone deacetylase"/>
    <property type="match status" value="1"/>
</dbReference>
<dbReference type="Gene3D" id="3.40.800.20">
    <property type="entry name" value="Histone deacetylase domain"/>
    <property type="match status" value="1"/>
</dbReference>
<dbReference type="InterPro" id="IPR050284">
    <property type="entry name" value="HDAC_PDAC"/>
</dbReference>
<dbReference type="InterPro" id="IPR000286">
    <property type="entry name" value="His_deacetylse"/>
</dbReference>
<dbReference type="InterPro" id="IPR003084">
    <property type="entry name" value="His_deacetylse_1"/>
</dbReference>
<dbReference type="InterPro" id="IPR023801">
    <property type="entry name" value="His_deacetylse_dom"/>
</dbReference>
<dbReference type="InterPro" id="IPR037138">
    <property type="entry name" value="His_deacetylse_dom_sf"/>
</dbReference>
<dbReference type="InterPro" id="IPR023696">
    <property type="entry name" value="Ureohydrolase_dom_sf"/>
</dbReference>
<dbReference type="PANTHER" id="PTHR10625:SF3">
    <property type="entry name" value="HISTONE DEACETYLASE 2"/>
    <property type="match status" value="1"/>
</dbReference>
<dbReference type="PANTHER" id="PTHR10625">
    <property type="entry name" value="HISTONE DEACETYLASE HDAC1-RELATED"/>
    <property type="match status" value="1"/>
</dbReference>
<dbReference type="Pfam" id="PF00850">
    <property type="entry name" value="Hist_deacetyl"/>
    <property type="match status" value="1"/>
</dbReference>
<dbReference type="PIRSF" id="PIRSF037913">
    <property type="entry name" value="His_deacetylse_1"/>
    <property type="match status" value="1"/>
</dbReference>
<dbReference type="PRINTS" id="PR01270">
    <property type="entry name" value="HDASUPER"/>
</dbReference>
<dbReference type="PRINTS" id="PR01271">
    <property type="entry name" value="HISDACETLASE"/>
</dbReference>
<dbReference type="SUPFAM" id="SSF52768">
    <property type="entry name" value="Arginase/deacetylase"/>
    <property type="match status" value="1"/>
</dbReference>
<reference key="1">
    <citation type="submission" date="1997-12" db="EMBL/GenBank/DDBJ databases">
        <authorList>
            <person name="Takami Y."/>
        </authorList>
    </citation>
    <scope>NUCLEOTIDE SEQUENCE [MRNA]</scope>
</reference>
<evidence type="ECO:0000250" key="1">
    <source>
        <dbReference type="UniProtKB" id="O15379"/>
    </source>
</evidence>
<evidence type="ECO:0000250" key="2">
    <source>
        <dbReference type="UniProtKB" id="P70288"/>
    </source>
</evidence>
<evidence type="ECO:0000250" key="3">
    <source>
        <dbReference type="UniProtKB" id="Q13547"/>
    </source>
</evidence>
<evidence type="ECO:0000250" key="4">
    <source>
        <dbReference type="UniProtKB" id="Q92769"/>
    </source>
</evidence>
<evidence type="ECO:0000256" key="5">
    <source>
        <dbReference type="SAM" id="MobiDB-lite"/>
    </source>
</evidence>
<evidence type="ECO:0000305" key="6"/>
<accession>P56519</accession>
<feature type="chain" id="PRO_0000114695" description="Histone deacetylase 2">
    <location>
        <begin position="1"/>
        <end position="488"/>
    </location>
</feature>
<feature type="region of interest" description="Histone deacetylase">
    <location>
        <begin position="9"/>
        <end position="322"/>
    </location>
</feature>
<feature type="region of interest" description="Disordered" evidence="5">
    <location>
        <begin position="389"/>
        <end position="488"/>
    </location>
</feature>
<feature type="compositionally biased region" description="Basic and acidic residues" evidence="5">
    <location>
        <begin position="402"/>
        <end position="417"/>
    </location>
</feature>
<feature type="compositionally biased region" description="Acidic residues" evidence="5">
    <location>
        <begin position="418"/>
        <end position="428"/>
    </location>
</feature>
<feature type="compositionally biased region" description="Basic and acidic residues" evidence="5">
    <location>
        <begin position="429"/>
        <end position="481"/>
    </location>
</feature>
<feature type="active site" evidence="3">
    <location>
        <position position="142"/>
    </location>
</feature>
<feature type="binding site" evidence="1">
    <location>
        <position position="28"/>
    </location>
    <ligand>
        <name>1D-myo-inositol 1,4,5,6-tetrakisphosphate</name>
        <dbReference type="ChEBI" id="CHEBI:57627"/>
    </ligand>
</feature>
<feature type="binding site" evidence="1">
    <location>
        <position position="32"/>
    </location>
    <ligand>
        <name>1D-myo-inositol 1,4,5,6-tetrakisphosphate</name>
        <dbReference type="ChEBI" id="CHEBI:57627"/>
    </ligand>
</feature>
<feature type="binding site" evidence="1">
    <location>
        <position position="177"/>
    </location>
    <ligand>
        <name>Zn(2+)</name>
        <dbReference type="ChEBI" id="CHEBI:29105"/>
    </ligand>
</feature>
<feature type="binding site" evidence="1">
    <location>
        <position position="179"/>
    </location>
    <ligand>
        <name>Zn(2+)</name>
        <dbReference type="ChEBI" id="CHEBI:29105"/>
    </ligand>
</feature>
<feature type="binding site" evidence="1">
    <location>
        <position position="265"/>
    </location>
    <ligand>
        <name>Zn(2+)</name>
        <dbReference type="ChEBI" id="CHEBI:29105"/>
    </ligand>
</feature>
<feature type="binding site" evidence="1">
    <location>
        <position position="271"/>
    </location>
    <ligand>
        <name>1D-myo-inositol 1,4,5,6-tetrakisphosphate</name>
        <dbReference type="ChEBI" id="CHEBI:57627"/>
    </ligand>
</feature>
<name>HDAC2_CHICK</name>
<gene>
    <name type="primary">HDAC2</name>
</gene>
<comment type="function">
    <text evidence="2 4">Histone deacetylase that catalyzes the deacetylation of lysine residues on the N-terminal part of the core histones (H2A, H2B, H3 and H4). Histone deacetylation gives a tag for epigenetic repression and plays an important role in transcriptional regulation, cell cycle progression and developmental events. Histone deacetylases act via the formation of large multiprotein complexes (By similarity). Also deacetylates non-histone proteins. In addition to protein deacetylase activity, also acts as a protein-lysine deacylase by recognizing other acyl groups: catalyzes removal of (2E)-butenoyl (crotonyl), lactoyl (lactyl) and 2-hydroxyisobutanoyl (2-hydroxyisobutyryl) acyl groups from lysine residues, leading to protein decrotonylation, delactylation and de-2-hydroxyisobutyrylation, respectively (By similarity).</text>
</comment>
<comment type="catalytic activity">
    <reaction evidence="2">
        <text>N(6)-acetyl-L-lysyl-[histone] + H2O = L-lysyl-[histone] + acetate</text>
        <dbReference type="Rhea" id="RHEA:58196"/>
        <dbReference type="Rhea" id="RHEA-COMP:9845"/>
        <dbReference type="Rhea" id="RHEA-COMP:11338"/>
        <dbReference type="ChEBI" id="CHEBI:15377"/>
        <dbReference type="ChEBI" id="CHEBI:29969"/>
        <dbReference type="ChEBI" id="CHEBI:30089"/>
        <dbReference type="ChEBI" id="CHEBI:61930"/>
        <dbReference type="EC" id="3.5.1.98"/>
    </reaction>
    <physiologicalReaction direction="left-to-right" evidence="2">
        <dbReference type="Rhea" id="RHEA:58197"/>
    </physiologicalReaction>
</comment>
<comment type="catalytic activity">
    <reaction evidence="4">
        <text>N(6)-acetyl-L-lysyl-[protein] + H2O = L-lysyl-[protein] + acetate</text>
        <dbReference type="Rhea" id="RHEA:58108"/>
        <dbReference type="Rhea" id="RHEA-COMP:9752"/>
        <dbReference type="Rhea" id="RHEA-COMP:10731"/>
        <dbReference type="ChEBI" id="CHEBI:15377"/>
        <dbReference type="ChEBI" id="CHEBI:29969"/>
        <dbReference type="ChEBI" id="CHEBI:30089"/>
        <dbReference type="ChEBI" id="CHEBI:61930"/>
    </reaction>
    <physiologicalReaction direction="left-to-right" evidence="4">
        <dbReference type="Rhea" id="RHEA:58109"/>
    </physiologicalReaction>
</comment>
<comment type="catalytic activity">
    <reaction evidence="4">
        <text>N(6)-(2E)-butenoyl-L-lysyl-[protein] + H2O = (2E)-2-butenoate + L-lysyl-[protein]</text>
        <dbReference type="Rhea" id="RHEA:69172"/>
        <dbReference type="Rhea" id="RHEA-COMP:9752"/>
        <dbReference type="Rhea" id="RHEA-COMP:13707"/>
        <dbReference type="ChEBI" id="CHEBI:15377"/>
        <dbReference type="ChEBI" id="CHEBI:29969"/>
        <dbReference type="ChEBI" id="CHEBI:35899"/>
        <dbReference type="ChEBI" id="CHEBI:137954"/>
    </reaction>
    <physiologicalReaction direction="left-to-right" evidence="4">
        <dbReference type="Rhea" id="RHEA:69173"/>
    </physiologicalReaction>
</comment>
<comment type="catalytic activity">
    <reaction evidence="4">
        <text>N(6)-(2-hydroxyisobutanoyl)-L-lysyl-[protein] + H2O = 2-hydroxy-2-methylpropanoate + L-lysyl-[protein]</text>
        <dbReference type="Rhea" id="RHEA:69176"/>
        <dbReference type="Rhea" id="RHEA-COMP:9752"/>
        <dbReference type="Rhea" id="RHEA-COMP:15921"/>
        <dbReference type="ChEBI" id="CHEBI:15377"/>
        <dbReference type="ChEBI" id="CHEBI:19641"/>
        <dbReference type="ChEBI" id="CHEBI:29969"/>
        <dbReference type="ChEBI" id="CHEBI:144968"/>
    </reaction>
    <physiologicalReaction direction="left-to-right" evidence="4">
        <dbReference type="Rhea" id="RHEA:69177"/>
    </physiologicalReaction>
</comment>
<comment type="catalytic activity">
    <reaction evidence="4">
        <text>N(6)-[(S)-lactoyl]-L-lysyl-[protein] + H2O = (S)-lactate + L-lysyl-[protein]</text>
        <dbReference type="Rhea" id="RHEA:81387"/>
        <dbReference type="Rhea" id="RHEA-COMP:9752"/>
        <dbReference type="Rhea" id="RHEA-COMP:19466"/>
        <dbReference type="ChEBI" id="CHEBI:15377"/>
        <dbReference type="ChEBI" id="CHEBI:16651"/>
        <dbReference type="ChEBI" id="CHEBI:29969"/>
        <dbReference type="ChEBI" id="CHEBI:231527"/>
    </reaction>
    <physiologicalReaction direction="left-to-right" evidence="4">
        <dbReference type="Rhea" id="RHEA:81388"/>
    </physiologicalReaction>
</comment>
<comment type="cofactor">
    <cofactor evidence="4">
        <name>Zn(2+)</name>
        <dbReference type="ChEBI" id="CHEBI:29105"/>
    </cofactor>
</comment>
<comment type="activity regulation">
    <text evidence="1">Inositol tetraphosphate (1D-myo-inositol 1,4,5,6-tetrakisphosphate) may act as an intermolecular glue between HDAC2 and N-Cor repressor complex components.</text>
</comment>
<comment type="subcellular location">
    <subcellularLocation>
        <location evidence="4">Nucleus</location>
    </subcellularLocation>
    <subcellularLocation>
        <location evidence="4">Cytoplasm</location>
    </subcellularLocation>
</comment>
<comment type="similarity">
    <text evidence="6">Belongs to the histone deacetylase family. HD type 1 subfamily.</text>
</comment>
<proteinExistence type="evidence at transcript level"/>
<sequence>MAYSQGGGKKKVCYYYDGDIGNYYYGQGHPMKPHRIRMTHNLLLNYGLYRKMEIYRPHKATAEEMTKYHSDEYIKFLRSIRPDNMSEYSKQMQRFNVGEDCPVFDGLFEFCQLSTGGSVAGAVKLNRQQTDMAVNWAGGLHHAKKSEASGFCYVNDIVLAILELLKYHQRVLYIDIDIHHGDGVEEAFYTTDRVMTVSEVSMVNNFPGTGDLRDIGAGKGKYYAVNFPMRDGIDDESYGQIFKPIISKVMEMYQPSAVVLQCGADSLSGDRLGCFNLTVKGHAKCVEVVKTFNLPLLMLGGGGYTIRNVARCWTYETAVALDCEIPNELPYNDYFEYFGPDFKLHISPSNMTNQNTPEYMEKIKQRLFENLRMLPHAPGVQMQAIPEDAVHEDSGDEDGEDPDKRISIRASDKRIACDEEFSDSEDEGEGGRRNVADHKKGAKKARIEEDKKETEDKKADVKEEDKSKDNSGEKTDTKGAKSEQLSNP</sequence>
<keyword id="KW-0156">Chromatin regulator</keyword>
<keyword id="KW-0963">Cytoplasm</keyword>
<keyword id="KW-0378">Hydrolase</keyword>
<keyword id="KW-0479">Metal-binding</keyword>
<keyword id="KW-0539">Nucleus</keyword>
<keyword id="KW-1185">Reference proteome</keyword>
<keyword id="KW-0678">Repressor</keyword>
<keyword id="KW-0804">Transcription</keyword>
<keyword id="KW-0805">Transcription regulation</keyword>
<keyword id="KW-0862">Zinc</keyword>
<organism>
    <name type="scientific">Gallus gallus</name>
    <name type="common">Chicken</name>
    <dbReference type="NCBI Taxonomy" id="9031"/>
    <lineage>
        <taxon>Eukaryota</taxon>
        <taxon>Metazoa</taxon>
        <taxon>Chordata</taxon>
        <taxon>Craniata</taxon>
        <taxon>Vertebrata</taxon>
        <taxon>Euteleostomi</taxon>
        <taxon>Archelosauria</taxon>
        <taxon>Archosauria</taxon>
        <taxon>Dinosauria</taxon>
        <taxon>Saurischia</taxon>
        <taxon>Theropoda</taxon>
        <taxon>Coelurosauria</taxon>
        <taxon>Aves</taxon>
        <taxon>Neognathae</taxon>
        <taxon>Galloanserae</taxon>
        <taxon>Galliformes</taxon>
        <taxon>Phasianidae</taxon>
        <taxon>Phasianinae</taxon>
        <taxon>Gallus</taxon>
    </lineage>
</organism>